<name>RPOA_ORYSJ</name>
<accession>P0C500</accession>
<accession>P12090</accession>
<accession>Q6QY54</accession>
<accession>Q6Z507</accession>
<protein>
    <recommendedName>
        <fullName evidence="1">DNA-directed RNA polymerase subunit alpha</fullName>
        <shortName evidence="1">PEP</shortName>
        <ecNumber evidence="1">2.7.7.6</ecNumber>
    </recommendedName>
    <alternativeName>
        <fullName evidence="1">Plastid-encoded RNA polymerase subunit alpha</fullName>
        <shortName evidence="1">RNA polymerase subunit alpha</shortName>
    </alternativeName>
</protein>
<feature type="chain" id="PRO_0000290092" description="DNA-directed RNA polymerase subunit alpha">
    <location>
        <begin position="1"/>
        <end position="337"/>
    </location>
</feature>
<feature type="region of interest" description="Alpha N-terminal domain (alpha-NTD)" evidence="1">
    <location>
        <begin position="1"/>
        <end position="233"/>
    </location>
</feature>
<feature type="region of interest" description="Alpha C-terminal domain (alpha-CTD)" evidence="1">
    <location>
        <begin position="264"/>
        <end position="337"/>
    </location>
</feature>
<reference key="1">
    <citation type="journal article" date="1989" name="Mol. Gen. Genet.">
        <title>The complete sequence of the rice (Oryza sativa) chloroplast genome: intermolecular recombination between distinct tRNA genes accounts for a major plastid DNA inversion during the evolution of the cereals.</title>
        <authorList>
            <person name="Hiratsuka J."/>
            <person name="Shimada H."/>
            <person name="Whittier R."/>
            <person name="Ishibashi T."/>
            <person name="Sakamoto M."/>
            <person name="Mori M."/>
            <person name="Kondo C."/>
            <person name="Honji Y."/>
            <person name="Sun C.-R."/>
            <person name="Meng B.-Y."/>
            <person name="Li Y.-Q."/>
            <person name="Kanno A."/>
            <person name="Nishizawa Y."/>
            <person name="Hirai A."/>
            <person name="Shinozaki K."/>
            <person name="Sugiura M."/>
        </authorList>
    </citation>
    <scope>NUCLEOTIDE SEQUENCE [LARGE SCALE GENOMIC DNA]</scope>
    <source>
        <strain>cv. Nipponbare</strain>
    </source>
</reference>
<reference key="2">
    <citation type="journal article" date="2004" name="Plant Physiol.">
        <title>A comparison of rice chloroplast genomes.</title>
        <authorList>
            <person name="Tang J."/>
            <person name="Xia H."/>
            <person name="Cao M."/>
            <person name="Zhang X."/>
            <person name="Zeng W."/>
            <person name="Hu S."/>
            <person name="Tong W."/>
            <person name="Wang J."/>
            <person name="Wang J."/>
            <person name="Yu J."/>
            <person name="Yang H."/>
            <person name="Zhu L."/>
        </authorList>
    </citation>
    <scope>NUCLEOTIDE SEQUENCE [LARGE SCALE GENOMIC DNA]</scope>
    <source>
        <strain>cv. Nipponbare</strain>
    </source>
</reference>
<reference key="3">
    <citation type="journal article" date="2005" name="Nature">
        <title>The map-based sequence of the rice genome.</title>
        <authorList>
            <consortium name="International rice genome sequencing project (IRGSP)"/>
        </authorList>
    </citation>
    <scope>NUCLEOTIDE SEQUENCE [LARGE SCALE GENOMIC DNA] (OS08G0252000)</scope>
    <source>
        <strain>cv. Nipponbare</strain>
    </source>
</reference>
<proteinExistence type="inferred from homology"/>
<geneLocation type="chloroplast"/>
<evidence type="ECO:0000255" key="1">
    <source>
        <dbReference type="HAMAP-Rule" id="MF_00059"/>
    </source>
</evidence>
<evidence type="ECO:0000305" key="2"/>
<comment type="function">
    <text evidence="1">DNA-dependent RNA polymerase catalyzes the transcription of DNA into RNA using the four ribonucleoside triphosphates as substrates.</text>
</comment>
<comment type="catalytic activity">
    <reaction evidence="1">
        <text>RNA(n) + a ribonucleoside 5'-triphosphate = RNA(n+1) + diphosphate</text>
        <dbReference type="Rhea" id="RHEA:21248"/>
        <dbReference type="Rhea" id="RHEA-COMP:14527"/>
        <dbReference type="Rhea" id="RHEA-COMP:17342"/>
        <dbReference type="ChEBI" id="CHEBI:33019"/>
        <dbReference type="ChEBI" id="CHEBI:61557"/>
        <dbReference type="ChEBI" id="CHEBI:140395"/>
        <dbReference type="EC" id="2.7.7.6"/>
    </reaction>
</comment>
<comment type="subunit">
    <text evidence="1">In plastids the minimal PEP RNA polymerase catalytic core is composed of four subunits: alpha, beta, beta', and beta''. When a (nuclear-encoded) sigma factor is associated with the core the holoenzyme is formed, which can initiate transcription.</text>
</comment>
<comment type="subcellular location">
    <subcellularLocation>
        <location>Plastid</location>
        <location>Chloroplast</location>
    </subcellularLocation>
</comment>
<comment type="domain">
    <text evidence="1">The N-terminal domain is essential for RNAP assembly and basal transcription, whereas the C-terminal domain is involved in interaction with transcriptional regulators and with upstream promoter elements.</text>
</comment>
<comment type="similarity">
    <text evidence="1">Belongs to the RNA polymerase alpha chain family.</text>
</comment>
<comment type="caution">
    <text evidence="2">A stretch of the chloroplast genome is duplicated within chromosome 8 resulting in the duplication of the gene. The expression of this duplicated gene (Os08g0252000) has not been demonstrated.</text>
</comment>
<keyword id="KW-0150">Chloroplast</keyword>
<keyword id="KW-0240">DNA-directed RNA polymerase</keyword>
<keyword id="KW-0548">Nucleotidyltransferase</keyword>
<keyword id="KW-0934">Plastid</keyword>
<keyword id="KW-1185">Reference proteome</keyword>
<keyword id="KW-0804">Transcription</keyword>
<keyword id="KW-0808">Transferase</keyword>
<organism>
    <name type="scientific">Oryza sativa subsp. japonica</name>
    <name type="common">Rice</name>
    <dbReference type="NCBI Taxonomy" id="39947"/>
    <lineage>
        <taxon>Eukaryota</taxon>
        <taxon>Viridiplantae</taxon>
        <taxon>Streptophyta</taxon>
        <taxon>Embryophyta</taxon>
        <taxon>Tracheophyta</taxon>
        <taxon>Spermatophyta</taxon>
        <taxon>Magnoliopsida</taxon>
        <taxon>Liliopsida</taxon>
        <taxon>Poales</taxon>
        <taxon>Poaceae</taxon>
        <taxon>BOP clade</taxon>
        <taxon>Oryzoideae</taxon>
        <taxon>Oryzeae</taxon>
        <taxon>Oryzinae</taxon>
        <taxon>Oryza</taxon>
        <taxon>Oryza sativa</taxon>
    </lineage>
</organism>
<dbReference type="EC" id="2.7.7.6" evidence="1"/>
<dbReference type="EMBL" id="X15901">
    <property type="protein sequence ID" value="CAA33979.1"/>
    <property type="molecule type" value="Genomic_DNA"/>
</dbReference>
<dbReference type="EMBL" id="AY522330">
    <property type="protein sequence ID" value="AAS46141.1"/>
    <property type="molecule type" value="Genomic_DNA"/>
</dbReference>
<dbReference type="EMBL" id="AP005161">
    <property type="protein sequence ID" value="BAD05519.1"/>
    <property type="molecule type" value="Genomic_DNA"/>
</dbReference>
<dbReference type="PIR" id="JQ0258">
    <property type="entry name" value="RNRZA"/>
</dbReference>
<dbReference type="RefSeq" id="NP_039417.1">
    <property type="nucleotide sequence ID" value="NC_001320.1"/>
</dbReference>
<dbReference type="SMR" id="P0C500"/>
<dbReference type="BioGRID" id="792799">
    <property type="interactions" value="1"/>
</dbReference>
<dbReference type="FunCoup" id="P0C500">
    <property type="interactions" value="77"/>
</dbReference>
<dbReference type="STRING" id="39947.P0C500"/>
<dbReference type="PaxDb" id="39947-P0C500"/>
<dbReference type="EnsemblPlants" id="transcript-rpoA">
    <property type="protein sequence ID" value="cds-CAA33979.1"/>
    <property type="gene ID" value="gene-rpoA"/>
</dbReference>
<dbReference type="GeneID" id="3131431"/>
<dbReference type="Gramene" id="transcript-rpoA">
    <property type="protein sequence ID" value="cds-CAA33979.1"/>
    <property type="gene ID" value="gene-rpoA"/>
</dbReference>
<dbReference type="KEGG" id="dosa:rpoA"/>
<dbReference type="KEGG" id="osa:3131431"/>
<dbReference type="InParanoid" id="P0C500"/>
<dbReference type="OrthoDB" id="723447at2759"/>
<dbReference type="Proteomes" id="UP000000763">
    <property type="component" value="Chromosome 8"/>
</dbReference>
<dbReference type="Proteomes" id="UP000059680">
    <property type="component" value="Chloroplast"/>
</dbReference>
<dbReference type="GO" id="GO:0009507">
    <property type="term" value="C:chloroplast"/>
    <property type="evidence" value="ECO:0007669"/>
    <property type="project" value="UniProtKB-SubCell"/>
</dbReference>
<dbReference type="GO" id="GO:0000428">
    <property type="term" value="C:DNA-directed RNA polymerase complex"/>
    <property type="evidence" value="ECO:0007669"/>
    <property type="project" value="UniProtKB-KW"/>
</dbReference>
<dbReference type="GO" id="GO:0005739">
    <property type="term" value="C:mitochondrion"/>
    <property type="evidence" value="ECO:0007669"/>
    <property type="project" value="GOC"/>
</dbReference>
<dbReference type="GO" id="GO:0009536">
    <property type="term" value="C:plastid"/>
    <property type="evidence" value="ECO:0000305"/>
    <property type="project" value="Gramene"/>
</dbReference>
<dbReference type="GO" id="GO:0003677">
    <property type="term" value="F:DNA binding"/>
    <property type="evidence" value="ECO:0007669"/>
    <property type="project" value="UniProtKB-UniRule"/>
</dbReference>
<dbReference type="GO" id="GO:0003899">
    <property type="term" value="F:DNA-directed RNA polymerase activity"/>
    <property type="evidence" value="ECO:0007669"/>
    <property type="project" value="UniProtKB-UniRule"/>
</dbReference>
<dbReference type="GO" id="GO:0046983">
    <property type="term" value="F:protein dimerization activity"/>
    <property type="evidence" value="ECO:0007669"/>
    <property type="project" value="InterPro"/>
</dbReference>
<dbReference type="GO" id="GO:0006351">
    <property type="term" value="P:DNA-templated transcription"/>
    <property type="evidence" value="ECO:0007669"/>
    <property type="project" value="UniProtKB-UniRule"/>
</dbReference>
<dbReference type="CDD" id="cd06928">
    <property type="entry name" value="RNAP_alpha_NTD"/>
    <property type="match status" value="1"/>
</dbReference>
<dbReference type="FunFam" id="1.10.150.20:FF:000021">
    <property type="entry name" value="DNA-directed RNA polymerase subunit alpha"/>
    <property type="match status" value="1"/>
</dbReference>
<dbReference type="FunFam" id="2.170.120.12:FF:000001">
    <property type="entry name" value="DNA-directed RNA polymerase subunit alpha"/>
    <property type="match status" value="1"/>
</dbReference>
<dbReference type="Gene3D" id="1.10.150.20">
    <property type="entry name" value="5' to 3' exonuclease, C-terminal subdomain"/>
    <property type="match status" value="1"/>
</dbReference>
<dbReference type="Gene3D" id="2.170.120.12">
    <property type="entry name" value="DNA-directed RNA polymerase, insert domain"/>
    <property type="match status" value="1"/>
</dbReference>
<dbReference type="Gene3D" id="3.30.1360.10">
    <property type="entry name" value="RNA polymerase, RBP11-like subunit"/>
    <property type="match status" value="1"/>
</dbReference>
<dbReference type="HAMAP" id="MF_00059">
    <property type="entry name" value="RNApol_bact_RpoA"/>
    <property type="match status" value="1"/>
</dbReference>
<dbReference type="InterPro" id="IPR011262">
    <property type="entry name" value="DNA-dir_RNA_pol_insert"/>
</dbReference>
<dbReference type="InterPro" id="IPR011263">
    <property type="entry name" value="DNA-dir_RNA_pol_RpoA/D/Rpb3"/>
</dbReference>
<dbReference type="InterPro" id="IPR011773">
    <property type="entry name" value="DNA-dir_RpoA"/>
</dbReference>
<dbReference type="InterPro" id="IPR036603">
    <property type="entry name" value="RBP11-like"/>
</dbReference>
<dbReference type="InterPro" id="IPR011260">
    <property type="entry name" value="RNAP_asu_C"/>
</dbReference>
<dbReference type="InterPro" id="IPR036643">
    <property type="entry name" value="RNApol_insert_sf"/>
</dbReference>
<dbReference type="NCBIfam" id="TIGR02027">
    <property type="entry name" value="rpoA"/>
    <property type="match status" value="1"/>
</dbReference>
<dbReference type="Pfam" id="PF01000">
    <property type="entry name" value="RNA_pol_A_bac"/>
    <property type="match status" value="1"/>
</dbReference>
<dbReference type="Pfam" id="PF03118">
    <property type="entry name" value="RNA_pol_A_CTD"/>
    <property type="match status" value="1"/>
</dbReference>
<dbReference type="Pfam" id="PF01193">
    <property type="entry name" value="RNA_pol_L"/>
    <property type="match status" value="1"/>
</dbReference>
<dbReference type="SMART" id="SM00662">
    <property type="entry name" value="RPOLD"/>
    <property type="match status" value="1"/>
</dbReference>
<dbReference type="SUPFAM" id="SSF47789">
    <property type="entry name" value="C-terminal domain of RNA polymerase alpha subunit"/>
    <property type="match status" value="1"/>
</dbReference>
<dbReference type="SUPFAM" id="SSF56553">
    <property type="entry name" value="Insert subdomain of RNA polymerase alpha subunit"/>
    <property type="match status" value="1"/>
</dbReference>
<dbReference type="SUPFAM" id="SSF55257">
    <property type="entry name" value="RBP11-like subunits of RNA polymerase"/>
    <property type="match status" value="1"/>
</dbReference>
<gene>
    <name evidence="1" type="primary">rpoA</name>
    <name type="ORF">Nip100</name>
</gene>
<sequence>MVREEVAGSTQTLQWKCVESRVDSKRLYYGRFILSPLRKGQADTVGIALRRALLGETEGTCITHAKFGSVPHEYSTIAGIEESVQEILLNLKEIVLRSNLYGVRTASICVKGPRYITAQDIILPPSVEIVDTAQPIANLTEPTDFRIELRIKRDRGYHTEVRKNTQDGSYPIDAVSMPVRNVNYSIFACGNGNAKYEILFLEIWTNGSLTPKEALYEASRNLIDLFLPFLHTEEEGTRFQENKNRFTSPLLSFQKRLTNLKKNKKRIPLNCIFIDQLELPSRTYNCLKRANIHTLLDLLSKTEEDLMRIDSFRMQDGKQIWDTLEKHLPMDLPKNKF</sequence>